<reference key="1">
    <citation type="journal article" date="1995" name="Science">
        <title>Whole-genome random sequencing and assembly of Haemophilus influenzae Rd.</title>
        <authorList>
            <person name="Fleischmann R.D."/>
            <person name="Adams M.D."/>
            <person name="White O."/>
            <person name="Clayton R.A."/>
            <person name="Kirkness E.F."/>
            <person name="Kerlavage A.R."/>
            <person name="Bult C.J."/>
            <person name="Tomb J.-F."/>
            <person name="Dougherty B.A."/>
            <person name="Merrick J.M."/>
            <person name="McKenney K."/>
            <person name="Sutton G.G."/>
            <person name="FitzHugh W."/>
            <person name="Fields C.A."/>
            <person name="Gocayne J.D."/>
            <person name="Scott J.D."/>
            <person name="Shirley R."/>
            <person name="Liu L.-I."/>
            <person name="Glodek A."/>
            <person name="Kelley J.M."/>
            <person name="Weidman J.F."/>
            <person name="Phillips C.A."/>
            <person name="Spriggs T."/>
            <person name="Hedblom E."/>
            <person name="Cotton M.D."/>
            <person name="Utterback T.R."/>
            <person name="Hanna M.C."/>
            <person name="Nguyen D.T."/>
            <person name="Saudek D.M."/>
            <person name="Brandon R.C."/>
            <person name="Fine L.D."/>
            <person name="Fritchman J.L."/>
            <person name="Fuhrmann J.L."/>
            <person name="Geoghagen N.S.M."/>
            <person name="Gnehm C.L."/>
            <person name="McDonald L.A."/>
            <person name="Small K.V."/>
            <person name="Fraser C.M."/>
            <person name="Smith H.O."/>
            <person name="Venter J.C."/>
        </authorList>
    </citation>
    <scope>NUCLEOTIDE SEQUENCE [LARGE SCALE GENOMIC DNA]</scope>
    <source>
        <strain>ATCC 51907 / DSM 11121 / KW20 / Rd</strain>
    </source>
</reference>
<name>FUCM_HAEIN</name>
<sequence>MLKGIHPALSPELLKTLAEMGHGDEIVLADAHFPAHSLHKNVIRADGISIDILLEAITPLFEFDAYVDAPLLMMKAVEGDSLDPNVETRYLNAIESAVGFTPNLTCLERFDFYTRAKQAYAVVVSGEIAKYGNIIIKKGVTPIL</sequence>
<keyword id="KW-0119">Carbohydrate metabolism</keyword>
<keyword id="KW-0963">Cytoplasm</keyword>
<keyword id="KW-0294">Fucose metabolism</keyword>
<keyword id="KW-0413">Isomerase</keyword>
<keyword id="KW-1185">Reference proteome</keyword>
<gene>
    <name evidence="1" type="primary">fucU</name>
    <name type="ordered locus">HI_0612</name>
</gene>
<protein>
    <recommendedName>
        <fullName evidence="1">L-fucose mutarotase</fullName>
        <ecNumber evidence="1">5.1.3.29</ecNumber>
    </recommendedName>
    <alternativeName>
        <fullName evidence="1">Fucose 1-epimerase</fullName>
    </alternativeName>
    <alternativeName>
        <fullName evidence="1">Type-2 mutarotase</fullName>
    </alternativeName>
</protein>
<feature type="chain" id="PRO_0000087383" description="L-fucose mutarotase">
    <location>
        <begin position="1"/>
        <end position="144"/>
    </location>
</feature>
<feature type="active site" description="Proton donor" evidence="1">
    <location>
        <position position="22"/>
    </location>
</feature>
<feature type="binding site" evidence="1">
    <location>
        <position position="30"/>
    </location>
    <ligand>
        <name>substrate</name>
    </ligand>
</feature>
<feature type="binding site" evidence="1">
    <location>
        <position position="109"/>
    </location>
    <ligand>
        <name>substrate</name>
    </ligand>
</feature>
<feature type="binding site" evidence="1">
    <location>
        <begin position="131"/>
        <end position="133"/>
    </location>
    <ligand>
        <name>substrate</name>
    </ligand>
</feature>
<proteinExistence type="inferred from homology"/>
<organism>
    <name type="scientific">Haemophilus influenzae (strain ATCC 51907 / DSM 11121 / KW20 / Rd)</name>
    <dbReference type="NCBI Taxonomy" id="71421"/>
    <lineage>
        <taxon>Bacteria</taxon>
        <taxon>Pseudomonadati</taxon>
        <taxon>Pseudomonadota</taxon>
        <taxon>Gammaproteobacteria</taxon>
        <taxon>Pasteurellales</taxon>
        <taxon>Pasteurellaceae</taxon>
        <taxon>Haemophilus</taxon>
    </lineage>
</organism>
<comment type="function">
    <text evidence="1">Involved in the anomeric conversion of L-fucose.</text>
</comment>
<comment type="catalytic activity">
    <reaction evidence="1">
        <text>alpha-L-fucose = beta-L-fucose</text>
        <dbReference type="Rhea" id="RHEA:25580"/>
        <dbReference type="ChEBI" id="CHEBI:42548"/>
        <dbReference type="ChEBI" id="CHEBI:42589"/>
        <dbReference type="EC" id="5.1.3.29"/>
    </reaction>
</comment>
<comment type="pathway">
    <text evidence="1">Carbohydrate metabolism; L-fucose metabolism.</text>
</comment>
<comment type="subunit">
    <text evidence="1">Homodecamer.</text>
</comment>
<comment type="subcellular location">
    <subcellularLocation>
        <location evidence="1">Cytoplasm</location>
    </subcellularLocation>
</comment>
<comment type="similarity">
    <text evidence="1">Belongs to the RbsD / FucU family. FucU mutarotase subfamily.</text>
</comment>
<accession>P44778</accession>
<evidence type="ECO:0000255" key="1">
    <source>
        <dbReference type="HAMAP-Rule" id="MF_01662"/>
    </source>
</evidence>
<dbReference type="EC" id="5.1.3.29" evidence="1"/>
<dbReference type="EMBL" id="L42023">
    <property type="protein sequence ID" value="AAC22271.1"/>
    <property type="molecule type" value="Genomic_DNA"/>
</dbReference>
<dbReference type="PIR" id="D64081">
    <property type="entry name" value="D64081"/>
</dbReference>
<dbReference type="RefSeq" id="NP_438770.1">
    <property type="nucleotide sequence ID" value="NC_000907.1"/>
</dbReference>
<dbReference type="SMR" id="P44778"/>
<dbReference type="STRING" id="71421.HI_0612"/>
<dbReference type="EnsemblBacteria" id="AAC22271">
    <property type="protein sequence ID" value="AAC22271"/>
    <property type="gene ID" value="HI_0612"/>
</dbReference>
<dbReference type="KEGG" id="hin:HI_0612"/>
<dbReference type="PATRIC" id="fig|71421.8.peg.636"/>
<dbReference type="eggNOG" id="COG4154">
    <property type="taxonomic scope" value="Bacteria"/>
</dbReference>
<dbReference type="HOGENOM" id="CLU_120075_1_0_6"/>
<dbReference type="OrthoDB" id="7947972at2"/>
<dbReference type="PhylomeDB" id="P44778"/>
<dbReference type="BioCyc" id="HINF71421:G1GJ1-633-MONOMER"/>
<dbReference type="UniPathway" id="UPA00956"/>
<dbReference type="Proteomes" id="UP000000579">
    <property type="component" value="Chromosome"/>
</dbReference>
<dbReference type="GO" id="GO:0005737">
    <property type="term" value="C:cytoplasm"/>
    <property type="evidence" value="ECO:0007669"/>
    <property type="project" value="UniProtKB-SubCell"/>
</dbReference>
<dbReference type="GO" id="GO:0042806">
    <property type="term" value="F:fucose binding"/>
    <property type="evidence" value="ECO:0000318"/>
    <property type="project" value="GO_Central"/>
</dbReference>
<dbReference type="GO" id="GO:0036373">
    <property type="term" value="F:L-fucose mutarotase activity"/>
    <property type="evidence" value="ECO:0007669"/>
    <property type="project" value="UniProtKB-EC"/>
</dbReference>
<dbReference type="GO" id="GO:0016857">
    <property type="term" value="F:racemase and epimerase activity, acting on carbohydrates and derivatives"/>
    <property type="evidence" value="ECO:0000318"/>
    <property type="project" value="GO_Central"/>
</dbReference>
<dbReference type="GO" id="GO:0006004">
    <property type="term" value="P:fucose metabolic process"/>
    <property type="evidence" value="ECO:0000318"/>
    <property type="project" value="GO_Central"/>
</dbReference>
<dbReference type="GO" id="GO:0036065">
    <property type="term" value="P:fucosylation"/>
    <property type="evidence" value="ECO:0000318"/>
    <property type="project" value="GO_Central"/>
</dbReference>
<dbReference type="GO" id="GO:0042354">
    <property type="term" value="P:L-fucose metabolic process"/>
    <property type="evidence" value="ECO:0007669"/>
    <property type="project" value="UniProtKB-UniRule"/>
</dbReference>
<dbReference type="FunFam" id="3.40.1650.10:FF:000001">
    <property type="entry name" value="L-fucose mutarotase"/>
    <property type="match status" value="1"/>
</dbReference>
<dbReference type="Gene3D" id="3.40.1650.10">
    <property type="entry name" value="RbsD-like domain"/>
    <property type="match status" value="1"/>
</dbReference>
<dbReference type="HAMAP" id="MF_01662">
    <property type="entry name" value="L_fucose_rotase"/>
    <property type="match status" value="1"/>
</dbReference>
<dbReference type="InterPro" id="IPR023751">
    <property type="entry name" value="L-fucose_mutarotase"/>
</dbReference>
<dbReference type="InterPro" id="IPR023750">
    <property type="entry name" value="RbsD-like_sf"/>
</dbReference>
<dbReference type="InterPro" id="IPR050443">
    <property type="entry name" value="RbsD/FucU_mutarotase"/>
</dbReference>
<dbReference type="InterPro" id="IPR007721">
    <property type="entry name" value="RbsD_FucU"/>
</dbReference>
<dbReference type="NCBIfam" id="NF011949">
    <property type="entry name" value="PRK15420.1"/>
    <property type="match status" value="1"/>
</dbReference>
<dbReference type="PANTHER" id="PTHR31690">
    <property type="entry name" value="FUCOSE MUTAROTASE"/>
    <property type="match status" value="1"/>
</dbReference>
<dbReference type="PANTHER" id="PTHR31690:SF4">
    <property type="entry name" value="FUCOSE MUTAROTASE"/>
    <property type="match status" value="1"/>
</dbReference>
<dbReference type="Pfam" id="PF05025">
    <property type="entry name" value="RbsD_FucU"/>
    <property type="match status" value="1"/>
</dbReference>
<dbReference type="SUPFAM" id="SSF102546">
    <property type="entry name" value="RbsD-like"/>
    <property type="match status" value="1"/>
</dbReference>